<accession>Q1J829</accession>
<name>Y382_STRPF</name>
<feature type="chain" id="PRO_0000298757" description="UPF0346 protein MGAS10750_Spy0382">
    <location>
        <begin position="1"/>
        <end position="71"/>
    </location>
</feature>
<sequence length="71" mass="8481">MRKSFYSWLMTQRNPKSNEPVAILADLVFDDTTFPKHTNDFELISRYLEDQASFSFNLGQFDEIWEDYLAH</sequence>
<dbReference type="EMBL" id="CP000262">
    <property type="protein sequence ID" value="ABF37332.1"/>
    <property type="molecule type" value="Genomic_DNA"/>
</dbReference>
<dbReference type="SMR" id="Q1J829"/>
<dbReference type="KEGG" id="spi:MGAS10750_Spy0382"/>
<dbReference type="HOGENOM" id="CLU_177534_1_0_9"/>
<dbReference type="Proteomes" id="UP000002434">
    <property type="component" value="Chromosome"/>
</dbReference>
<dbReference type="Gene3D" id="1.10.150.260">
    <property type="entry name" value="YozE SAM-like"/>
    <property type="match status" value="1"/>
</dbReference>
<dbReference type="HAMAP" id="MF_01538">
    <property type="entry name" value="UPF0346"/>
    <property type="match status" value="1"/>
</dbReference>
<dbReference type="InterPro" id="IPR010673">
    <property type="entry name" value="UPF0346"/>
</dbReference>
<dbReference type="InterPro" id="IPR023089">
    <property type="entry name" value="YozE_SAM-like"/>
</dbReference>
<dbReference type="InterPro" id="IPR036806">
    <property type="entry name" value="YozE_SAM-like_sf"/>
</dbReference>
<dbReference type="NCBIfam" id="NF010193">
    <property type="entry name" value="PRK13672.1"/>
    <property type="match status" value="1"/>
</dbReference>
<dbReference type="Pfam" id="PF06855">
    <property type="entry name" value="YozE_SAM_like"/>
    <property type="match status" value="1"/>
</dbReference>
<dbReference type="PIRSF" id="PIRSF037262">
    <property type="entry name" value="UCP037262"/>
    <property type="match status" value="1"/>
</dbReference>
<dbReference type="SUPFAM" id="SSF140652">
    <property type="entry name" value="YozE-like"/>
    <property type="match status" value="1"/>
</dbReference>
<comment type="similarity">
    <text evidence="1">Belongs to the UPF0346 family.</text>
</comment>
<proteinExistence type="inferred from homology"/>
<gene>
    <name type="ordered locus">MGAS10750_Spy0382</name>
</gene>
<protein>
    <recommendedName>
        <fullName evidence="1">UPF0346 protein MGAS10750_Spy0382</fullName>
    </recommendedName>
</protein>
<reference key="1">
    <citation type="journal article" date="2006" name="Proc. Natl. Acad. Sci. U.S.A.">
        <title>Molecular genetic anatomy of inter- and intraserotype variation in the human bacterial pathogen group A Streptococcus.</title>
        <authorList>
            <person name="Beres S.B."/>
            <person name="Richter E.W."/>
            <person name="Nagiec M.J."/>
            <person name="Sumby P."/>
            <person name="Porcella S.F."/>
            <person name="DeLeo F.R."/>
            <person name="Musser J.M."/>
        </authorList>
    </citation>
    <scope>NUCLEOTIDE SEQUENCE [LARGE SCALE GENOMIC DNA]</scope>
    <source>
        <strain>MGAS10750</strain>
    </source>
</reference>
<organism>
    <name type="scientific">Streptococcus pyogenes serotype M4 (strain MGAS10750)</name>
    <dbReference type="NCBI Taxonomy" id="370554"/>
    <lineage>
        <taxon>Bacteria</taxon>
        <taxon>Bacillati</taxon>
        <taxon>Bacillota</taxon>
        <taxon>Bacilli</taxon>
        <taxon>Lactobacillales</taxon>
        <taxon>Streptococcaceae</taxon>
        <taxon>Streptococcus</taxon>
    </lineage>
</organism>
<evidence type="ECO:0000255" key="1">
    <source>
        <dbReference type="HAMAP-Rule" id="MF_01538"/>
    </source>
</evidence>